<comment type="function">
    <text evidence="3">As a component of the minor spliceosome, involved in the splicing of U12-type introns in pre-mRNAs. Plays a role in the regulation of primary cilia length and Hedgehog signaling.</text>
</comment>
<comment type="subunit">
    <text evidence="2 3">Component of the minor spliceosome (By similarity). Within this complex, interacts with RNF113A, as well as with SF3B1/SF3b155, SF3B2/SF3b145, SF3B3/SF3b130 and CDC5L (By similarity). May interact with LUC7L2 and SNRNP70 (By similarity).</text>
</comment>
<comment type="subcellular location">
    <subcellularLocation>
        <location evidence="2">Nucleus</location>
        <location evidence="2">Nucleoplasm</location>
    </subcellularLocation>
    <subcellularLocation>
        <location evidence="2">Nucleus speckle</location>
    </subcellularLocation>
    <text evidence="2">Colocalizes with LUC7L2 and SNRNP70 in nuclear speckles.</text>
</comment>
<reference key="1">
    <citation type="submission" date="2005-08" db="EMBL/GenBank/DDBJ databases">
        <authorList>
            <consortium name="NIH - Mammalian Gene Collection (MGC) project"/>
        </authorList>
    </citation>
    <scope>NUCLEOTIDE SEQUENCE [LARGE SCALE MRNA]</scope>
    <source>
        <strain>Hereford</strain>
        <tissue>Thymus</tissue>
    </source>
</reference>
<protein>
    <recommendedName>
        <fullName>Sodium channel modifier 1</fullName>
    </recommendedName>
</protein>
<sequence>MSFKREGDDWSQLNVLKKRRVGDLLASYIPEDEALMLRDGRFACAICPHRPVLDTLAMLTAHRAGKKHLSSLQLFYGKKPPGKGTEQNPRQHNELRREETTAEAPLLTQTRLITQSALHRAPHYNSCCRRKYRPEAPRPSVSRPPLPPPEVEPQGGKISREPEPEAGSQTKESATVSSPAPMSPTRRRALDHYLTLRSSGWIPDGRGRWIKDENVEFDSDEEEPPDLPLD</sequence>
<feature type="chain" id="PRO_0000259634" description="Sodium channel modifier 1">
    <location>
        <begin position="1"/>
        <end position="230"/>
    </location>
</feature>
<feature type="zinc finger region" description="Matrin-type">
    <location>
        <begin position="42"/>
        <end position="74"/>
    </location>
</feature>
<feature type="region of interest" description="Disordered" evidence="5">
    <location>
        <begin position="76"/>
        <end position="106"/>
    </location>
</feature>
<feature type="region of interest" description="Disordered" evidence="5">
    <location>
        <begin position="129"/>
        <end position="191"/>
    </location>
</feature>
<feature type="region of interest" description="Required for interaction with LUC7L2" evidence="1">
    <location>
        <begin position="188"/>
        <end position="230"/>
    </location>
</feature>
<feature type="short sequence motif" description="Bipartite nuclear localization signal" evidence="4">
    <location>
        <begin position="4"/>
        <end position="20"/>
    </location>
</feature>
<feature type="compositionally biased region" description="Basic and acidic residues" evidence="5">
    <location>
        <begin position="89"/>
        <end position="100"/>
    </location>
</feature>
<feature type="compositionally biased region" description="Pro residues" evidence="5">
    <location>
        <begin position="142"/>
        <end position="151"/>
    </location>
</feature>
<feature type="compositionally biased region" description="Polar residues" evidence="5">
    <location>
        <begin position="167"/>
        <end position="180"/>
    </location>
</feature>
<feature type="modified residue" description="Phosphoserine" evidence="3">
    <location>
        <position position="2"/>
    </location>
</feature>
<feature type="modified residue" description="Phosphoserine" evidence="2">
    <location>
        <position position="183"/>
    </location>
</feature>
<feature type="modified residue" description="Phosphoserine" evidence="3">
    <location>
        <position position="219"/>
    </location>
</feature>
<feature type="cross-link" description="Glycyl lysine isopeptide (Lys-Gly) (interchain with G-Cter in SUMO2)" evidence="3">
    <location>
        <position position="67"/>
    </location>
</feature>
<evidence type="ECO:0000250" key="1"/>
<evidence type="ECO:0000250" key="2">
    <source>
        <dbReference type="UniProtKB" id="Q8K136"/>
    </source>
</evidence>
<evidence type="ECO:0000250" key="3">
    <source>
        <dbReference type="UniProtKB" id="Q9BWG6"/>
    </source>
</evidence>
<evidence type="ECO:0000255" key="4"/>
<evidence type="ECO:0000256" key="5">
    <source>
        <dbReference type="SAM" id="MobiDB-lite"/>
    </source>
</evidence>
<gene>
    <name type="primary">SCNM1</name>
</gene>
<keyword id="KW-1017">Isopeptide bond</keyword>
<keyword id="KW-0479">Metal-binding</keyword>
<keyword id="KW-0507">mRNA processing</keyword>
<keyword id="KW-0508">mRNA splicing</keyword>
<keyword id="KW-0539">Nucleus</keyword>
<keyword id="KW-0597">Phosphoprotein</keyword>
<keyword id="KW-1185">Reference proteome</keyword>
<keyword id="KW-0747">Spliceosome</keyword>
<keyword id="KW-0832">Ubl conjugation</keyword>
<keyword id="KW-0862">Zinc</keyword>
<keyword id="KW-0863">Zinc-finger</keyword>
<dbReference type="EMBL" id="BC103163">
    <property type="protein sequence ID" value="AAI03164.1"/>
    <property type="molecule type" value="mRNA"/>
</dbReference>
<dbReference type="RefSeq" id="NP_001029426.1">
    <property type="nucleotide sequence ID" value="NM_001034254.2"/>
</dbReference>
<dbReference type="SMR" id="Q3ZBR0"/>
<dbReference type="FunCoup" id="Q3ZBR0">
    <property type="interactions" value="1754"/>
</dbReference>
<dbReference type="STRING" id="9913.ENSBTAP00000024057"/>
<dbReference type="PaxDb" id="9913-ENSBTAP00000024057"/>
<dbReference type="GeneID" id="505644"/>
<dbReference type="KEGG" id="bta:505644"/>
<dbReference type="CTD" id="79005"/>
<dbReference type="VEuPathDB" id="HostDB:ENSBTAG00000018070"/>
<dbReference type="eggNOG" id="ENOG502QWNV">
    <property type="taxonomic scope" value="Eukaryota"/>
</dbReference>
<dbReference type="HOGENOM" id="CLU_059812_0_0_1"/>
<dbReference type="InParanoid" id="Q3ZBR0"/>
<dbReference type="OMA" id="NGKYACT"/>
<dbReference type="OrthoDB" id="1924550at2759"/>
<dbReference type="TreeFam" id="TF332168"/>
<dbReference type="Proteomes" id="UP000009136">
    <property type="component" value="Chromosome 3"/>
</dbReference>
<dbReference type="Bgee" id="ENSBTAG00000018070">
    <property type="expression patterns" value="Expressed in oocyte and 104 other cell types or tissues"/>
</dbReference>
<dbReference type="GO" id="GO:0016607">
    <property type="term" value="C:nuclear speck"/>
    <property type="evidence" value="ECO:0000250"/>
    <property type="project" value="UniProtKB"/>
</dbReference>
<dbReference type="GO" id="GO:0005634">
    <property type="term" value="C:nucleus"/>
    <property type="evidence" value="ECO:0000318"/>
    <property type="project" value="GO_Central"/>
</dbReference>
<dbReference type="GO" id="GO:0005681">
    <property type="term" value="C:spliceosomal complex"/>
    <property type="evidence" value="ECO:0007669"/>
    <property type="project" value="UniProtKB-KW"/>
</dbReference>
<dbReference type="GO" id="GO:0008270">
    <property type="term" value="F:zinc ion binding"/>
    <property type="evidence" value="ECO:0007669"/>
    <property type="project" value="UniProtKB-KW"/>
</dbReference>
<dbReference type="GO" id="GO:0000380">
    <property type="term" value="P:alternative mRNA splicing, via spliceosome"/>
    <property type="evidence" value="ECO:0000250"/>
    <property type="project" value="UniProtKB"/>
</dbReference>
<dbReference type="GO" id="GO:0008380">
    <property type="term" value="P:RNA splicing"/>
    <property type="evidence" value="ECO:0000318"/>
    <property type="project" value="GO_Central"/>
</dbReference>
<dbReference type="InterPro" id="IPR033570">
    <property type="entry name" value="SCNM1"/>
</dbReference>
<dbReference type="InterPro" id="IPR031625">
    <property type="entry name" value="SCNM1_acidic"/>
</dbReference>
<dbReference type="InterPro" id="IPR031622">
    <property type="entry name" value="Znf-SCNM1"/>
</dbReference>
<dbReference type="PANTHER" id="PTHR32297">
    <property type="entry name" value="SODIUM CHANNEL MODIFIER 1"/>
    <property type="match status" value="1"/>
</dbReference>
<dbReference type="PANTHER" id="PTHR32297:SF1">
    <property type="entry name" value="SODIUM CHANNEL MODIFIER 1"/>
    <property type="match status" value="1"/>
</dbReference>
<dbReference type="Pfam" id="PF15805">
    <property type="entry name" value="SCNM1_acidic"/>
    <property type="match status" value="1"/>
</dbReference>
<dbReference type="Pfam" id="PF15803">
    <property type="entry name" value="zf-SCNM1"/>
    <property type="match status" value="1"/>
</dbReference>
<name>SCNM1_BOVIN</name>
<organism>
    <name type="scientific">Bos taurus</name>
    <name type="common">Bovine</name>
    <dbReference type="NCBI Taxonomy" id="9913"/>
    <lineage>
        <taxon>Eukaryota</taxon>
        <taxon>Metazoa</taxon>
        <taxon>Chordata</taxon>
        <taxon>Craniata</taxon>
        <taxon>Vertebrata</taxon>
        <taxon>Euteleostomi</taxon>
        <taxon>Mammalia</taxon>
        <taxon>Eutheria</taxon>
        <taxon>Laurasiatheria</taxon>
        <taxon>Artiodactyla</taxon>
        <taxon>Ruminantia</taxon>
        <taxon>Pecora</taxon>
        <taxon>Bovidae</taxon>
        <taxon>Bovinae</taxon>
        <taxon>Bos</taxon>
    </lineage>
</organism>
<proteinExistence type="evidence at transcript level"/>
<accession>Q3ZBR0</accession>